<name>IC1_HUMAN</name>
<proteinExistence type="evidence at protein level"/>
<reference key="1">
    <citation type="journal article" date="1986" name="Biochem. Biophys. Res. Commun.">
        <title>Isolation and analysis of a cDNA coding for human C1 inhibitor.</title>
        <authorList>
            <person name="Que B.G."/>
            <person name="Petra P.H."/>
        </authorList>
    </citation>
    <scope>NUCLEOTIDE SEQUENCE [MRNA] (ISOFORM 1)</scope>
</reference>
<reference key="2">
    <citation type="journal article" date="1986" name="Biochemistry">
        <title>Human C1 inhibitor: primary structure, cDNA cloning, and chromosomal localization.</title>
        <authorList>
            <person name="Bock S.C."/>
            <person name="Skriver K."/>
            <person name="Nielsen E."/>
            <person name="Thoegersen H.-C."/>
            <person name="Wiman B."/>
            <person name="Donaldson V.H."/>
            <person name="Eddy R.L."/>
            <person name="Marrinan J."/>
            <person name="Radziejewska E."/>
            <person name="Huber R."/>
            <person name="Shows T.B."/>
            <person name="Magnusson S."/>
        </authorList>
    </citation>
    <scope>NUCLEOTIDE SEQUENCE [MRNA] (ISOFORM 1)</scope>
    <scope>PARTIAL PROTEIN SEQUENCE</scope>
    <scope>SUBCELLULAR LOCATION</scope>
    <scope>GLYCOSYLATION AT ASN-25; THR-48; SER-64; ASN-69; THR-71; ASN-81; THR-83; THR-88; THR-92; THR-96; ASN-238; ASN-253 AND ASN-352</scope>
</reference>
<reference key="3">
    <citation type="journal article" date="1988" name="Eur. J. Biochem.">
        <title>Genomic and cDNA cloning of the human C1 inhibitor. Intron-exon junctions and comparison with other serpins.</title>
        <authorList>
            <person name="Carter P.E."/>
            <person name="Dunbar B."/>
            <person name="Fothergill J.E."/>
        </authorList>
    </citation>
    <scope>NUCLEOTIDE SEQUENCE [GENOMIC DNA / MRNA] (ISOFORM 1)</scope>
</reference>
<reference key="4">
    <citation type="journal article" date="1991" name="Eur. J. Biochem.">
        <title>Complete nucleotide sequence of the gene for human C1 inhibitor with an unusually high density of Alu elements.</title>
        <authorList>
            <person name="Carter P.E."/>
            <person name="Duponchel C."/>
            <person name="Tosi M."/>
            <person name="Fothergill J.E."/>
        </authorList>
    </citation>
    <scope>NUCLEOTIDE SEQUENCE [GENOMIC DNA]</scope>
</reference>
<reference key="5">
    <citation type="submission" date="2001-10" db="EMBL/GenBank/DDBJ databases">
        <title>Production of recombinant human C1 inhibitor in milk of transgenic rabbits for potential use in enzyme replacement therapy for hereditary angioedema.</title>
        <authorList>
            <person name="Heus J."/>
            <person name="Platenburg-Kootwijk E."/>
            <person name="Meershoek E."/>
            <person name="De Winter R."/>
            <person name="Knijnenburg J."/>
            <person name="Kupers L."/>
            <person name="Habex H."/>
            <person name="Renaers I."/>
            <person name="Samuel C."/>
            <person name="Bonnarens L."/>
            <person name="Hoffman S."/>
            <person name="Brouwer M."/>
            <person name="Hack E."/>
            <person name="Horbach D."/>
            <person name="Timmermans M."/>
            <person name="Nuijens J."/>
            <person name="Pieper F."/>
        </authorList>
    </citation>
    <scope>NUCLEOTIDE SEQUENCE [GENOMIC DNA]</scope>
    <source>
        <tissue>Foreskin</tissue>
    </source>
</reference>
<reference key="6">
    <citation type="journal article" date="2004" name="Nat. Genet.">
        <title>Complete sequencing and characterization of 21,243 full-length human cDNAs.</title>
        <authorList>
            <person name="Ota T."/>
            <person name="Suzuki Y."/>
            <person name="Nishikawa T."/>
            <person name="Otsuki T."/>
            <person name="Sugiyama T."/>
            <person name="Irie R."/>
            <person name="Wakamatsu A."/>
            <person name="Hayashi K."/>
            <person name="Sato H."/>
            <person name="Nagai K."/>
            <person name="Kimura K."/>
            <person name="Makita H."/>
            <person name="Sekine M."/>
            <person name="Obayashi M."/>
            <person name="Nishi T."/>
            <person name="Shibahara T."/>
            <person name="Tanaka T."/>
            <person name="Ishii S."/>
            <person name="Yamamoto J."/>
            <person name="Saito K."/>
            <person name="Kawai Y."/>
            <person name="Isono Y."/>
            <person name="Nakamura Y."/>
            <person name="Nagahari K."/>
            <person name="Murakami K."/>
            <person name="Yasuda T."/>
            <person name="Iwayanagi T."/>
            <person name="Wagatsuma M."/>
            <person name="Shiratori A."/>
            <person name="Sudo H."/>
            <person name="Hosoiri T."/>
            <person name="Kaku Y."/>
            <person name="Kodaira H."/>
            <person name="Kondo H."/>
            <person name="Sugawara M."/>
            <person name="Takahashi M."/>
            <person name="Kanda K."/>
            <person name="Yokoi T."/>
            <person name="Furuya T."/>
            <person name="Kikkawa E."/>
            <person name="Omura Y."/>
            <person name="Abe K."/>
            <person name="Kamihara K."/>
            <person name="Katsuta N."/>
            <person name="Sato K."/>
            <person name="Tanikawa M."/>
            <person name="Yamazaki M."/>
            <person name="Ninomiya K."/>
            <person name="Ishibashi T."/>
            <person name="Yamashita H."/>
            <person name="Murakawa K."/>
            <person name="Fujimori K."/>
            <person name="Tanai H."/>
            <person name="Kimata M."/>
            <person name="Watanabe M."/>
            <person name="Hiraoka S."/>
            <person name="Chiba Y."/>
            <person name="Ishida S."/>
            <person name="Ono Y."/>
            <person name="Takiguchi S."/>
            <person name="Watanabe S."/>
            <person name="Yosida M."/>
            <person name="Hotuta T."/>
            <person name="Kusano J."/>
            <person name="Kanehori K."/>
            <person name="Takahashi-Fujii A."/>
            <person name="Hara H."/>
            <person name="Tanase T.-O."/>
            <person name="Nomura Y."/>
            <person name="Togiya S."/>
            <person name="Komai F."/>
            <person name="Hara R."/>
            <person name="Takeuchi K."/>
            <person name="Arita M."/>
            <person name="Imose N."/>
            <person name="Musashino K."/>
            <person name="Yuuki H."/>
            <person name="Oshima A."/>
            <person name="Sasaki N."/>
            <person name="Aotsuka S."/>
            <person name="Yoshikawa Y."/>
            <person name="Matsunawa H."/>
            <person name="Ichihara T."/>
            <person name="Shiohata N."/>
            <person name="Sano S."/>
            <person name="Moriya S."/>
            <person name="Momiyama H."/>
            <person name="Satoh N."/>
            <person name="Takami S."/>
            <person name="Terashima Y."/>
            <person name="Suzuki O."/>
            <person name="Nakagawa S."/>
            <person name="Senoh A."/>
            <person name="Mizoguchi H."/>
            <person name="Goto Y."/>
            <person name="Shimizu F."/>
            <person name="Wakebe H."/>
            <person name="Hishigaki H."/>
            <person name="Watanabe T."/>
            <person name="Sugiyama A."/>
            <person name="Takemoto M."/>
            <person name="Kawakami B."/>
            <person name="Yamazaki M."/>
            <person name="Watanabe K."/>
            <person name="Kumagai A."/>
            <person name="Itakura S."/>
            <person name="Fukuzumi Y."/>
            <person name="Fujimori Y."/>
            <person name="Komiyama M."/>
            <person name="Tashiro H."/>
            <person name="Tanigami A."/>
            <person name="Fujiwara T."/>
            <person name="Ono T."/>
            <person name="Yamada K."/>
            <person name="Fujii Y."/>
            <person name="Ozaki K."/>
            <person name="Hirao M."/>
            <person name="Ohmori Y."/>
            <person name="Kawabata A."/>
            <person name="Hikiji T."/>
            <person name="Kobatake N."/>
            <person name="Inagaki H."/>
            <person name="Ikema Y."/>
            <person name="Okamoto S."/>
            <person name="Okitani R."/>
            <person name="Kawakami T."/>
            <person name="Noguchi S."/>
            <person name="Itoh T."/>
            <person name="Shigeta K."/>
            <person name="Senba T."/>
            <person name="Matsumura K."/>
            <person name="Nakajima Y."/>
            <person name="Mizuno T."/>
            <person name="Morinaga M."/>
            <person name="Sasaki M."/>
            <person name="Togashi T."/>
            <person name="Oyama M."/>
            <person name="Hata H."/>
            <person name="Watanabe M."/>
            <person name="Komatsu T."/>
            <person name="Mizushima-Sugano J."/>
            <person name="Satoh T."/>
            <person name="Shirai Y."/>
            <person name="Takahashi Y."/>
            <person name="Nakagawa K."/>
            <person name="Okumura K."/>
            <person name="Nagase T."/>
            <person name="Nomura N."/>
            <person name="Kikuchi H."/>
            <person name="Masuho Y."/>
            <person name="Yamashita R."/>
            <person name="Nakai K."/>
            <person name="Yada T."/>
            <person name="Nakamura Y."/>
            <person name="Ohara O."/>
            <person name="Isogai T."/>
            <person name="Sugano S."/>
        </authorList>
    </citation>
    <scope>NUCLEOTIDE SEQUENCE [LARGE SCALE MRNA] (ISOFORMS 1; 2 AND 3)</scope>
    <source>
        <tissue>Heart</tissue>
        <tissue>Liver</tissue>
        <tissue>Ovary</tissue>
        <tissue>Uterus</tissue>
    </source>
</reference>
<reference key="7">
    <citation type="submission" date="2003-05" db="EMBL/GenBank/DDBJ databases">
        <title>Cloning of human full-length CDSs in BD Creator(TM) system donor vector.</title>
        <authorList>
            <person name="Kalnine N."/>
            <person name="Chen X."/>
            <person name="Rolfs A."/>
            <person name="Halleck A."/>
            <person name="Hines L."/>
            <person name="Eisenstein S."/>
            <person name="Koundinya M."/>
            <person name="Raphael J."/>
            <person name="Moreira D."/>
            <person name="Kelley T."/>
            <person name="LaBaer J."/>
            <person name="Lin Y."/>
            <person name="Phelan M."/>
            <person name="Farmer A."/>
        </authorList>
    </citation>
    <scope>NUCLEOTIDE SEQUENCE [LARGE SCALE MRNA] (ISOFORM 1)</scope>
    <scope>VARIANT MET-480</scope>
</reference>
<reference key="8">
    <citation type="submission" date="2005-03" db="EMBL/GenBank/DDBJ databases">
        <authorList>
            <person name="Totoki Y."/>
            <person name="Toyoda A."/>
            <person name="Takeda T."/>
            <person name="Sakaki Y."/>
            <person name="Tanaka A."/>
            <person name="Yokoyama S."/>
            <person name="Ohara O."/>
            <person name="Nagase T."/>
            <person name="Kikuno R.F."/>
        </authorList>
    </citation>
    <scope>NUCLEOTIDE SEQUENCE [LARGE SCALE MRNA] (ISOFORM 1)</scope>
    <scope>VARIANT MET-480</scope>
    <source>
        <tissue>Brain</tissue>
    </source>
</reference>
<reference key="9">
    <citation type="submission" date="2005-01" db="EMBL/GenBank/DDBJ databases">
        <authorList>
            <consortium name="SeattleSNPs variation discovery resource"/>
        </authorList>
    </citation>
    <scope>NUCLEOTIDE SEQUENCE [GENOMIC DNA]</scope>
    <scope>VARIANT MET-480</scope>
</reference>
<reference key="10">
    <citation type="journal article" date="2006" name="Nature">
        <title>Human chromosome 11 DNA sequence and analysis including novel gene identification.</title>
        <authorList>
            <person name="Taylor T.D."/>
            <person name="Noguchi H."/>
            <person name="Totoki Y."/>
            <person name="Toyoda A."/>
            <person name="Kuroki Y."/>
            <person name="Dewar K."/>
            <person name="Lloyd C."/>
            <person name="Itoh T."/>
            <person name="Takeda T."/>
            <person name="Kim D.-W."/>
            <person name="She X."/>
            <person name="Barlow K.F."/>
            <person name="Bloom T."/>
            <person name="Bruford E."/>
            <person name="Chang J.L."/>
            <person name="Cuomo C.A."/>
            <person name="Eichler E."/>
            <person name="FitzGerald M.G."/>
            <person name="Jaffe D.B."/>
            <person name="LaButti K."/>
            <person name="Nicol R."/>
            <person name="Park H.-S."/>
            <person name="Seaman C."/>
            <person name="Sougnez C."/>
            <person name="Yang X."/>
            <person name="Zimmer A.R."/>
            <person name="Zody M.C."/>
            <person name="Birren B.W."/>
            <person name="Nusbaum C."/>
            <person name="Fujiyama A."/>
            <person name="Hattori M."/>
            <person name="Rogers J."/>
            <person name="Lander E.S."/>
            <person name="Sakaki Y."/>
        </authorList>
    </citation>
    <scope>NUCLEOTIDE SEQUENCE [LARGE SCALE GENOMIC DNA]</scope>
</reference>
<reference key="11">
    <citation type="submission" date="2005-07" db="EMBL/GenBank/DDBJ databases">
        <authorList>
            <person name="Mural R.J."/>
            <person name="Istrail S."/>
            <person name="Sutton G.G."/>
            <person name="Florea L."/>
            <person name="Halpern A.L."/>
            <person name="Mobarry C.M."/>
            <person name="Lippert R."/>
            <person name="Walenz B."/>
            <person name="Shatkay H."/>
            <person name="Dew I."/>
            <person name="Miller J.R."/>
            <person name="Flanigan M.J."/>
            <person name="Edwards N.J."/>
            <person name="Bolanos R."/>
            <person name="Fasulo D."/>
            <person name="Halldorsson B.V."/>
            <person name="Hannenhalli S."/>
            <person name="Turner R."/>
            <person name="Yooseph S."/>
            <person name="Lu F."/>
            <person name="Nusskern D.R."/>
            <person name="Shue B.C."/>
            <person name="Zheng X.H."/>
            <person name="Zhong F."/>
            <person name="Delcher A.L."/>
            <person name="Huson D.H."/>
            <person name="Kravitz S.A."/>
            <person name="Mouchard L."/>
            <person name="Reinert K."/>
            <person name="Remington K.A."/>
            <person name="Clark A.G."/>
            <person name="Waterman M.S."/>
            <person name="Eichler E.E."/>
            <person name="Adams M.D."/>
            <person name="Hunkapiller M.W."/>
            <person name="Myers E.W."/>
            <person name="Venter J.C."/>
        </authorList>
    </citation>
    <scope>NUCLEOTIDE SEQUENCE [LARGE SCALE GENOMIC DNA]</scope>
</reference>
<reference key="12">
    <citation type="journal article" date="2004" name="Genome Res.">
        <title>The status, quality, and expansion of the NIH full-length cDNA project: the Mammalian Gene Collection (MGC).</title>
        <authorList>
            <consortium name="The MGC Project Team"/>
        </authorList>
    </citation>
    <scope>NUCLEOTIDE SEQUENCE [LARGE SCALE MRNA] (ISOFORM 1)</scope>
    <scope>VARIANT MET-480</scope>
    <source>
        <tissue>Brain</tissue>
    </source>
</reference>
<reference key="13">
    <citation type="journal article" date="1988" name="Protein Seq. Data Anal.">
        <title>Molecular cloning of the cDNA coding for human C1 inhibitor.</title>
        <authorList>
            <person name="Rauth G."/>
            <person name="Schumacher G."/>
            <person name="Buckel P."/>
            <person name="Mueller-Esterl W."/>
        </authorList>
    </citation>
    <scope>NUCLEOTIDE SEQUENCE [MRNA] OF 6-500 (ISOFORM 1)</scope>
</reference>
<reference key="14">
    <citation type="journal article" date="2003" name="J. Biol. Chem.">
        <title>The functional integrity of the serpin domain of C1-inhibitor depends on the unique N-terminal domain, as revealed by a pathological mutant.</title>
        <authorList>
            <person name="Bos I.G.A."/>
            <person name="Lubbers Y.T.P."/>
            <person name="Roem D."/>
            <person name="Abrahams J.P."/>
            <person name="Hack C.E."/>
            <person name="Eldering E."/>
        </authorList>
    </citation>
    <scope>NUCLEOTIDE SEQUENCE [GENOMIC DNA] OF 18-188</scope>
    <scope>VARIANT HAE1 84-ASP--THR-138 DEL</scope>
    <source>
        <tissue>Blood</tissue>
    </source>
</reference>
<reference key="15">
    <citation type="journal article" date="1983" name="Biochemistry">
        <title>Human C1 inhibitor: improved isolation and preliminary structural characterization.</title>
        <authorList>
            <person name="Harrison R.A."/>
        </authorList>
    </citation>
    <scope>PROTEIN SEQUENCE OF 23-62</scope>
    <scope>FUNCTION</scope>
    <scope>SUBCELLULAR LOCATION</scope>
</reference>
<reference key="16">
    <citation type="journal article" date="1990" name="Proc. Natl. Acad. Sci. U.S.A.">
        <title>Clusters of intragenic Alu repeats predispose the human C1 inhibitor locus to deleterious rearrangements.</title>
        <authorList>
            <person name="Stoppa-Lyonnet D."/>
            <person name="Carter P.E."/>
            <person name="Meo T."/>
            <person name="Tosi M."/>
        </authorList>
    </citation>
    <scope>NUCLEOTIDE SEQUENCE [GENOMIC DNA] OF 33-228</scope>
</reference>
<reference key="17">
    <citation type="journal article" date="1986" name="Gene">
        <title>Molecular cloning of human C1 inhibitor: sequence homologies with alpha 1-antitrypsin and other members of the serpins superfamily.</title>
        <authorList>
            <person name="Tosi M."/>
            <person name="Duponchel C."/>
            <person name="Bourgarel P."/>
            <person name="Colomb M."/>
            <person name="Meo T."/>
        </authorList>
    </citation>
    <scope>NUCLEOTIDE SEQUENCE [MRNA] OF 213-500 (ISOFORM 1/2/3)</scope>
</reference>
<reference key="18">
    <citation type="journal article" date="1996" name="J. Urol.">
        <title>Molecular weights and isoelectric points of sperm antigens relevant to autoimmune infertility in men.</title>
        <authorList>
            <person name="Pillai S."/>
            <person name="Wright D."/>
            <person name="Gupta A."/>
            <person name="Zhou G."/>
            <person name="Hull G."/>
            <person name="Jiang H."/>
            <person name="Zhang H."/>
        </authorList>
    </citation>
    <scope>PROTEIN SEQUENCE OF 217-233</scope>
</reference>
<reference key="19">
    <citation type="journal article" date="1986" name="Proc. Natl. Acad. Sci. U.S.A.">
        <title>Human inhibitor of the first component of complement, C1: characterization of cDNA clones and localization of the gene to chromosome 11.</title>
        <authorList>
            <person name="Davis A.E. III"/>
            <person name="Whitehead A.S."/>
            <person name="Harrison R.A."/>
            <person name="Dauphinias A."/>
            <person name="Bruns G.A."/>
            <person name="Cicardi M."/>
            <person name="Rosen F.S."/>
        </authorList>
    </citation>
    <scope>NUCLEOTIDE SEQUENCE [MRNA] OF 241-458 (ISOFORM 1/2/3)</scope>
    <scope>PARTIAL PROTEIN SEQUENCE</scope>
    <scope>FUNCTION</scope>
</reference>
<reference key="20">
    <citation type="journal article" date="1995" name="J. Clin. Invest.">
        <title>Crucial residues in the carboxy-terminal end of C1 inhibitor revealed by pathogenic mutants impaired in secretion or function.</title>
        <authorList>
            <person name="Verpy E."/>
            <person name="Couture-Tosi E."/>
            <person name="Eldering E."/>
            <person name="Lopez-Trascasa M."/>
            <person name="Spath P."/>
            <person name="Meo T."/>
            <person name="Tosi M."/>
        </authorList>
    </citation>
    <scope>NUCLEOTIDE SEQUENCE [GENOMIC DNA] OF 418-500</scope>
    <scope>VARIANTS HAE1 MET-473; ARG-481; PRO-481; ARG-489 AND SER-498</scope>
</reference>
<reference key="21">
    <citation type="journal article" date="1993" name="Protein Sci.">
        <title>Chymotrypsin inhibitory activity of normal C1-inhibitor and a P1 Arg to His mutant: evidence for the presence of overlapping reactive centers.</title>
        <authorList>
            <person name="Aulak K.S."/>
            <person name="Davis A.E. III"/>
            <person name="Donaldson V.H."/>
            <person name="Harrison R.A."/>
        </authorList>
    </citation>
    <scope>PROTEIN SEQUENCE OF 464-481</scope>
    <scope>FUNCTION</scope>
    <scope>REACTIVE SITE FOR CHYMOTRYPSIN</scope>
    <source>
        <tissue>Plasma</tissue>
    </source>
</reference>
<reference key="22">
    <citation type="journal article" date="2000" name="J. Immunol.">
        <title>Proteolytic activities of two types of mannose-binding lectin-associated serine protease.</title>
        <authorList>
            <person name="Matsushita M."/>
            <person name="Thiel S."/>
            <person name="Jensenius J.C."/>
            <person name="Terai I."/>
            <person name="Fujita T."/>
        </authorList>
    </citation>
    <scope>FUNCTION</scope>
    <scope>INTERACTION WITH MASP1</scope>
</reference>
<reference key="23">
    <citation type="journal article" date="2002" name="Mol. Microbiol.">
        <title>StcE, a metalloprotease secreted by Escherichia coli O157:H7, specifically cleaves C1 esterase inhibitor.</title>
        <authorList>
            <person name="Lathem W.W."/>
            <person name="Grys T.E."/>
            <person name="Witowski S.E."/>
            <person name="Torres A.G."/>
            <person name="Kaper J.B."/>
            <person name="Tarr P.I."/>
            <person name="Welch R.A."/>
        </authorList>
    </citation>
    <scope>INTERACTION WITH E.COLI STCE</scope>
    <scope>PROTEOLYTIC PROCESSING BY E.COLI STCE</scope>
</reference>
<reference key="24">
    <citation type="journal article" date="2003" name="Nat. Biotechnol.">
        <title>Identification and quantification of N-linked glycoproteins using hydrazide chemistry, stable isotope labeling and mass spectrometry.</title>
        <authorList>
            <person name="Zhang H."/>
            <person name="Li X.-J."/>
            <person name="Martin D.B."/>
            <person name="Aebersold R."/>
        </authorList>
    </citation>
    <scope>GLYCOSYLATION AT ASN-253</scope>
</reference>
<reference key="25">
    <citation type="journal article" date="2004" name="J. Exp. Med.">
        <title>Potentiation of C1 esterase inhibitor by StcE, a metalloprotease secreted by Escherichia coli O157:H7.</title>
        <authorList>
            <person name="Lathem W.W."/>
            <person name="Bergsbaken T."/>
            <person name="Welch R.A."/>
        </authorList>
    </citation>
    <scope>INTERACTION WITH E.COLI STCE</scope>
    <scope>PROTEOLYTIC PROCESSING BY E.COLI STCE</scope>
</reference>
<reference key="26">
    <citation type="journal article" date="2004" name="Proteomics">
        <title>Screening for N-glycosylated proteins by liquid chromatography mass spectrometry.</title>
        <authorList>
            <person name="Bunkenborg J."/>
            <person name="Pilch B.J."/>
            <person name="Podtelejnikov A.V."/>
            <person name="Wisniewski J.R."/>
        </authorList>
    </citation>
    <scope>GLYCOSYLATION [LARGE SCALE ANALYSIS] AT ASN-25; ASN-238; ASN-253 AND ASN-352</scope>
    <source>
        <tissue>Plasma</tissue>
    </source>
</reference>
<reference key="27">
    <citation type="journal article" date="2005" name="Infect. Immun.">
        <title>N-linked glycosylation at Asn3 and the positively charged residues within the amino-terminal domain of the c1 inhibitor are required for interaction of the C1 Inhibitor with Salmonella enterica serovar typhimurium lipopolysaccharide and lipid A.</title>
        <authorList>
            <person name="Liu D."/>
            <person name="Cramer C.C."/>
            <person name="Scafidi J."/>
            <person name="Davis A.E. III"/>
        </authorList>
    </citation>
    <scope>GLYCOSYLATION AT ASN-25</scope>
</reference>
<reference key="28">
    <citation type="journal article" date="2001" name="J. Biol. Chem.">
        <title>Substrate specificities of recombinant mannan-binding lectin-associated serine proteases-1 and -2.</title>
        <authorList>
            <person name="Rossi V."/>
            <person name="Cseh S."/>
            <person name="Bally I."/>
            <person name="Thielens N.M."/>
            <person name="Jensenius J.C."/>
            <person name="Arlaud G.J."/>
        </authorList>
    </citation>
    <scope>FUNCTION</scope>
</reference>
<reference key="29">
    <citation type="journal article" date="2005" name="J. Biol. Chem.">
        <title>Elucidation of the substrate specificity of the C1s protease of the classical complement pathway.</title>
        <authorList>
            <person name="Kerr F.K."/>
            <person name="O'Brien G."/>
            <person name="Quinsey N.S."/>
            <person name="Whisstock J.C."/>
            <person name="Boyd S."/>
            <person name="de la Banda M.G."/>
            <person name="Kaiserman D."/>
            <person name="Matthews A.Y."/>
            <person name="Bird P.I."/>
            <person name="Pike R.N."/>
        </authorList>
    </citation>
    <scope>PROTEOLYTIC CLEAVAGE</scope>
</reference>
<reference key="30">
    <citation type="journal article" date="2005" name="J. Proteome Res.">
        <title>Human plasma N-glycoproteome analysis by immunoaffinity subtraction, hydrazide chemistry, and mass spectrometry.</title>
        <authorList>
            <person name="Liu T."/>
            <person name="Qian W.-J."/>
            <person name="Gritsenko M.A."/>
            <person name="Camp D.G. II"/>
            <person name="Monroe M.E."/>
            <person name="Moore R.J."/>
            <person name="Smith R.D."/>
        </authorList>
    </citation>
    <scope>GLYCOSYLATION [LARGE SCALE ANALYSIS] AT ASN-25; ASN-69; ASN-238; ASN-253 AND ASN-352</scope>
    <source>
        <tissue>Plasma</tissue>
    </source>
</reference>
<reference key="31">
    <citation type="journal article" date="2009" name="J. Proteome Res.">
        <title>Glycoproteomics analysis of human liver tissue by combination of multiple enzyme digestion and hydrazide chemistry.</title>
        <authorList>
            <person name="Chen R."/>
            <person name="Jiang X."/>
            <person name="Sun D."/>
            <person name="Han G."/>
            <person name="Wang F."/>
            <person name="Ye M."/>
            <person name="Wang L."/>
            <person name="Zou H."/>
        </authorList>
    </citation>
    <scope>GLYCOSYLATION [LARGE SCALE ANALYSIS] AT ASN-69; ASN-81; ASN-238; ASN-253 AND ASN-352</scope>
    <source>
        <tissue>Liver</tissue>
    </source>
</reference>
<reference key="32">
    <citation type="journal article" date="2009" name="Mol. Cell. Proteomics">
        <title>A strategy for precise and large scale identification of core fucosylated glycoproteins.</title>
        <authorList>
            <person name="Jia W."/>
            <person name="Lu Z."/>
            <person name="Fu Y."/>
            <person name="Wang H.P."/>
            <person name="Wang L.H."/>
            <person name="Chi H."/>
            <person name="Yuan Z.F."/>
            <person name="Zheng Z.B."/>
            <person name="Song L.N."/>
            <person name="Han H.H."/>
            <person name="Liang Y.M."/>
            <person name="Wang J.L."/>
            <person name="Cai Y."/>
            <person name="Zhang Y.K."/>
            <person name="Deng Y.L."/>
            <person name="Ying W.T."/>
            <person name="He S.M."/>
            <person name="Qian X.H."/>
        </authorList>
    </citation>
    <scope>GLYCOSYLATION AT ASN-238; ASN-253 AND ASN-352</scope>
</reference>
<reference key="33">
    <citation type="journal article" date="2009" name="Nat. Methods">
        <title>Enrichment of glycopeptides for glycan structure and attachment site identification.</title>
        <authorList>
            <person name="Nilsson J."/>
            <person name="Rueetschi U."/>
            <person name="Halim A."/>
            <person name="Hesse C."/>
            <person name="Carlsohn E."/>
            <person name="Brinkmalm G."/>
            <person name="Larson G."/>
        </authorList>
    </citation>
    <scope>GLYCOSYLATION [LARGE SCALE ANALYSIS] AT ASN-352</scope>
    <scope>STRUCTURE OF CARBOHYDRATES</scope>
    <source>
        <tissue>Cerebrospinal fluid</tissue>
    </source>
</reference>
<reference key="34">
    <citation type="journal article" date="2012" name="Mol. Cell. Proteomics">
        <title>Human urinary glycoproteomics; attachment site specific analysis of N- and O-linked glycosylations by CID and ECD.</title>
        <authorList>
            <person name="Halim A."/>
            <person name="Nilsson J."/>
            <person name="Ruetschi U."/>
            <person name="Hesse C."/>
            <person name="Larson G."/>
        </authorList>
    </citation>
    <scope>GLYCOSYLATION AT ASN-25; THR-47 AND THR-48</scope>
    <scope>STRUCTURE OF CARBOHYDRATES</scope>
    <scope>IDENTIFICATION BY MASS SPECTROMETRY</scope>
</reference>
<reference key="35">
    <citation type="journal article" date="2013" name="J. Proteome Res.">
        <title>LC-MS/MS characterization of O-glycosylation sites and glycan structures of human cerebrospinal fluid glycoproteins.</title>
        <authorList>
            <person name="Halim A."/>
            <person name="Ruetschi U."/>
            <person name="Larson G."/>
            <person name="Nilsson J."/>
        </authorList>
    </citation>
    <scope>GLYCOSYLATION AT THR-47 AND THR-48</scope>
    <scope>IDENTIFICATION BY MASS SPECTROMETRY</scope>
</reference>
<reference key="36">
    <citation type="journal article" date="2014" name="J. Proteomics">
        <title>An enzyme assisted RP-RPLC approach for in-depth analysis of human liver phosphoproteome.</title>
        <authorList>
            <person name="Bian Y."/>
            <person name="Song C."/>
            <person name="Cheng K."/>
            <person name="Dong M."/>
            <person name="Wang F."/>
            <person name="Huang J."/>
            <person name="Sun D."/>
            <person name="Wang L."/>
            <person name="Ye M."/>
            <person name="Zou H."/>
        </authorList>
    </citation>
    <scope>IDENTIFICATION BY MASS SPECTROMETRY [LARGE SCALE ANALYSIS]</scope>
    <source>
        <tissue>Liver</tissue>
    </source>
</reference>
<reference key="37">
    <citation type="journal article" date="2007" name="J. Biol. Chem.">
        <title>C1 inhibitor serpin domain structure reveals the likely mechanism of heparin potentiation and conformational disease.</title>
        <authorList>
            <person name="Beinrohr L."/>
            <person name="Harmat V."/>
            <person name="Dobo J."/>
            <person name="Loerincz Z."/>
            <person name="Gal P."/>
            <person name="Zavodszky P."/>
        </authorList>
    </citation>
    <scope>X-RAY CRYSTALLOGRAPHY (2.35 ANGSTROMS) OF 119-500</scope>
    <scope>DISULFIDE BONDS</scope>
    <scope>GLYCOSYLATION AT ASN-238</scope>
</reference>
<reference key="38">
    <citation type="journal article" date="1995" name="Nat. Struct. Biol.">
        <title>What do dysfunctional serpins tell us about molecular mobility and disease?</title>
        <authorList>
            <person name="Stein P.E."/>
            <person name="Carrell R.W."/>
        </authorList>
    </citation>
    <scope>REVIEW ON VARIANTS</scope>
</reference>
<reference key="39">
    <citation type="journal article" date="1988" name="Biochem. J.">
        <title>Dysfunctional C1-inhibitor(At), isolated from a type II hereditary-angio-oedema plasma, contains a P1 'reactive centre' (Arg444--&gt;His) mutation.</title>
        <authorList>
            <person name="Aulak K.S."/>
            <person name="Pemberton P.A."/>
            <person name="Rosen F.S."/>
            <person name="Carrell R.W."/>
            <person name="Lachmann P.J."/>
            <person name="Harrison R.A."/>
        </authorList>
    </citation>
    <scope>VARIANT HAE1 HIS-466</scope>
</reference>
<reference key="40">
    <citation type="journal article" date="1990" name="FEBS Lett.">
        <title>Identification of a new P1 residue mutation (444Arg--&gt;Ser) in a dysfunctional C1 inhibitor protein contained in a type II hereditary angioedema plasma.</title>
        <authorList>
            <person name="Aulak K.S."/>
            <person name="Cicardi M."/>
            <person name="Harrison R.A."/>
        </authorList>
    </citation>
    <scope>VARIANT HAE1 SER-466</scope>
</reference>
<reference key="41">
    <citation type="journal article" date="1990" name="Proc. Natl. Acad. Sci. U.S.A.">
        <title>Type II hereditary angioneurotic edema that may result from a single nucleotide change in the codon for alanine-436 in the C1 inhibitor gene.</title>
        <authorList>
            <person name="Levy N.J."/>
            <person name="Ramesh N."/>
            <person name="Cicardi M."/>
            <person name="Harrison R.A."/>
            <person name="Davis A.E. III"/>
        </authorList>
    </citation>
    <scope>VARIANT HAE1 THR-458</scope>
</reference>
<reference key="42">
    <citation type="journal article" date="1990" name="Proc. Natl. Acad. Sci. U.S.A.">
        <title>Dysfunctional C1 inhibitor Ta: deletion of Lys-251 results in acquisition of an N-glycosylation site.</title>
        <authorList>
            <person name="Parad R.B."/>
            <person name="Kramer J."/>
            <person name="Strunk R.C."/>
            <person name="Rosen F.S."/>
            <person name="Davis A.E. III"/>
        </authorList>
    </citation>
    <scope>VARIANT HAE1 LYS-273 DEL</scope>
</reference>
<reference key="43">
    <citation type="journal article" date="1991" name="Clin. Exp. Immunol.">
        <title>Identification of type II hereditary angio-oedema (HAE) mutations.</title>
        <authorList>
            <person name="Siddique Z.M."/>
            <person name="McPhaden A.R."/>
            <person name="Whaley K."/>
        </authorList>
    </citation>
    <scope>VARIANTS HAE1 GLU-456 AND VAL-458</scope>
</reference>
<reference key="44">
    <citation type="journal article" date="1992" name="FEBS Lett.">
        <title>A dysfunctional C1 inhibitor protein with a new reactive center mutation (Arg-444--&gt;Leu).</title>
        <authorList>
            <person name="Frange D."/>
            <person name="Aulak K.S."/>
            <person name="Cicardi M."/>
            <person name="Harrison R.A."/>
            <person name="Davis A.E. III"/>
        </authorList>
    </citation>
    <scope>VARIANT HAE1 LEU-466</scope>
</reference>
<reference key="45">
    <citation type="journal article" date="1992" name="Nat. Genet.">
        <title>C1 inhibitor hinge region mutations produce dysfunction by different mechanisms.</title>
        <authorList>
            <person name="Davis A.E. III"/>
            <person name="Aulak K."/>
            <person name="Parad R.B."/>
            <person name="Stecklein H.P."/>
            <person name="Eldering E."/>
            <person name="Hack C.E."/>
            <person name="Kramer J."/>
            <person name="Strunk R.C."/>
            <person name="Bissler J."/>
            <person name="Rosen F.S."/>
        </authorList>
    </citation>
    <scope>VARIANTS HAE1 GLU-454 AND THR-458</scope>
</reference>
<reference key="46">
    <citation type="journal article" date="1993" name="Behring Inst. Mitt.">
        <title>Mutations in the C1 inhibitor gene that result in hereditary angioneurotic edema.</title>
        <authorList>
            <person name="Davis A.E. III"/>
            <person name="Bissler J.J."/>
            <person name="Cicardi M."/>
        </authorList>
    </citation>
    <scope>VARIANT HAE1 ARG-429</scope>
</reference>
<reference key="47">
    <citation type="journal article" date="1995" name="J. Clin. Invest.">
        <title>Unique C1 inhibitor dysfunction in a kindred without angioedema. II. Identification of an Ala443--&gt;Val substitution and functional analysis of the recombinant mutant protein.</title>
        <authorList>
            <person name="Zahedi R."/>
            <person name="Bissler J.J."/>
            <person name="Davis A.E. III"/>
            <person name="Andreadis C."/>
            <person name="Wisnieski J.J."/>
        </authorList>
    </citation>
    <scope>VARIANT HAE1 VAL-465</scope>
</reference>
<reference key="48">
    <citation type="journal article" date="1995" name="Mol. Med.">
        <title>A mutation unique in serine protease inhibitors (serpins) identified in a family with type II hereditary angioneurotic edema.</title>
        <authorList>
            <person name="Ocejo-Vinyals J.G."/>
            <person name="Leyva-Cobian F."/>
            <person name="Fernandez-Luna J.L."/>
        </authorList>
    </citation>
    <scope>VARIANT HAE1 PRO-467</scope>
</reference>
<reference key="49">
    <citation type="journal article" date="1996" name="Am. J. Hum. Genet.">
        <title>Exhaustive mutation scanning by fluorescence-assisted mismatch analysis discloses new genotype-phenotype correlations in angiodema.</title>
        <authorList>
            <person name="Verpy E."/>
            <person name="Biasotto M."/>
            <person name="Brai M."/>
            <person name="Misiano G."/>
            <person name="Meo T."/>
            <person name="Tosi M."/>
        </authorList>
    </citation>
    <scope>VARIANT HAE1 SER-477</scope>
</reference>
<reference key="50">
    <citation type="journal article" date="2003" name="Hum. Mutat.">
        <title>Mutation screening of the C1 inhibitor gene among Hungarian patients with hereditary angioedema.</title>
        <authorList>
            <person name="Kalmar L."/>
            <person name="Bors A."/>
            <person name="Farkas H."/>
            <person name="Vas S."/>
            <person name="Fandl B."/>
            <person name="Varga L."/>
            <person name="Fuest G."/>
            <person name="Tordai A."/>
        </authorList>
    </citation>
    <scope>VARIANTS HAE1 TYR-130; PRO-394; VAL-408; CYS-466; GLU-473; GLU-493 AND ARG-498</scope>
</reference>
<reference key="51">
    <citation type="journal article" date="2006" name="Allergy">
        <title>Normal C1 inhibitor mRNA expression level in type I hereditary angioedema patients: newly found C1 inhibitor gene mutations.</title>
        <authorList>
            <person name="Kang H.-R."/>
            <person name="Yim E.-Y."/>
            <person name="Oh S.-Y."/>
            <person name="Chang Y.-S."/>
            <person name="Kim Y.-K."/>
            <person name="Cho S.-H."/>
            <person name="Min K.-U."/>
            <person name="Kim Y.-Y."/>
        </authorList>
    </citation>
    <scope>VARIANT HAE1 ARG-345</scope>
    <scope>VARIANTS ALA-56 AND MET-480</scope>
</reference>
<reference key="52">
    <citation type="journal article" date="2012" name="Allergy">
        <title>Mutational spectrum and geno-phenotype correlation in Chinese families with Hereditary Angioedema.</title>
        <authorList>
            <person name="Xu Y.Y."/>
            <person name="Zhi Y.X."/>
            <person name="Yin J."/>
            <person name="Wang L.L."/>
            <person name="Wen L.P."/>
            <person name="Gu J.Q."/>
            <person name="Guan K."/>
            <person name="Craig T."/>
            <person name="Zhang H.Y."/>
        </authorList>
    </citation>
    <scope>VARIANTS HAE1 ALA-118; CYS-154; PHE-170; ARG-184; PRO-230; LYS-232; ASN-272 DEL; ARG-299; GLN-430; THR-441; PRO-447; SER-466; CYS-466; LEU-466; GLY-473 AND GLY-497</scope>
    <scope>VARIANTS ALA-56 AND MET-480</scope>
</reference>
<reference key="53">
    <citation type="journal article" date="2014" name="Ann. Hum. Genet.">
        <title>Mutational spectrum of the c1 inhibitor gene in a cohort of Italian patients with hereditary angioedema: description of nine novel mutations.</title>
        <authorList>
            <person name="Bafunno V."/>
            <person name="Bova M."/>
            <person name="Loffredo S."/>
            <person name="Divella C."/>
            <person name="Petraroli A."/>
            <person name="Marone G."/>
            <person name="Montinaro V."/>
            <person name="Margaglione M."/>
            <person name="Triggiani M."/>
        </authorList>
    </citation>
    <scope>VARIANTS HAE1 ARG-11; ARG-265; VAL-274; THR-458; CYS-466; HIS-466; ARG-493 AND GLU-493</scope>
</reference>
<gene>
    <name type="primary">SERPING1</name>
    <name type="synonym">C1IN</name>
    <name type="synonym">C1NH</name>
</gene>
<evidence type="ECO:0000256" key="1">
    <source>
        <dbReference type="SAM" id="MobiDB-lite"/>
    </source>
</evidence>
<evidence type="ECO:0000269" key="2">
    <source>
    </source>
</evidence>
<evidence type="ECO:0000269" key="3">
    <source>
    </source>
</evidence>
<evidence type="ECO:0000269" key="4">
    <source>
    </source>
</evidence>
<evidence type="ECO:0000269" key="5">
    <source>
    </source>
</evidence>
<evidence type="ECO:0000269" key="6">
    <source>
    </source>
</evidence>
<evidence type="ECO:0000269" key="7">
    <source>
    </source>
</evidence>
<evidence type="ECO:0000269" key="8">
    <source>
    </source>
</evidence>
<evidence type="ECO:0000269" key="9">
    <source>
    </source>
</evidence>
<evidence type="ECO:0000269" key="10">
    <source>
    </source>
</evidence>
<evidence type="ECO:0000269" key="11">
    <source>
    </source>
</evidence>
<evidence type="ECO:0000269" key="12">
    <source>
    </source>
</evidence>
<evidence type="ECO:0000269" key="13">
    <source>
    </source>
</evidence>
<evidence type="ECO:0000269" key="14">
    <source>
    </source>
</evidence>
<evidence type="ECO:0000269" key="15">
    <source>
    </source>
</evidence>
<evidence type="ECO:0000269" key="16">
    <source>
    </source>
</evidence>
<evidence type="ECO:0000269" key="17">
    <source>
    </source>
</evidence>
<evidence type="ECO:0000269" key="18">
    <source>
    </source>
</evidence>
<evidence type="ECO:0000269" key="19">
    <source>
    </source>
</evidence>
<evidence type="ECO:0000269" key="20">
    <source>
    </source>
</evidence>
<evidence type="ECO:0000269" key="21">
    <source>
    </source>
</evidence>
<evidence type="ECO:0000269" key="22">
    <source>
    </source>
</evidence>
<evidence type="ECO:0000269" key="23">
    <source>
    </source>
</evidence>
<evidence type="ECO:0000269" key="24">
    <source>
    </source>
</evidence>
<evidence type="ECO:0000269" key="25">
    <source>
    </source>
</evidence>
<evidence type="ECO:0000269" key="26">
    <source>
    </source>
</evidence>
<evidence type="ECO:0000269" key="27">
    <source>
    </source>
</evidence>
<evidence type="ECO:0000269" key="28">
    <source>
    </source>
</evidence>
<evidence type="ECO:0000269" key="29">
    <source>
    </source>
</evidence>
<evidence type="ECO:0000269" key="30">
    <source>
    </source>
</evidence>
<evidence type="ECO:0000269" key="31">
    <source>
    </source>
</evidence>
<evidence type="ECO:0000269" key="32">
    <source>
    </source>
</evidence>
<evidence type="ECO:0000269" key="33">
    <source>
    </source>
</evidence>
<evidence type="ECO:0000269" key="34">
    <source>
    </source>
</evidence>
<evidence type="ECO:0000269" key="35">
    <source>
    </source>
</evidence>
<evidence type="ECO:0000269" key="36">
    <source>
    </source>
</evidence>
<evidence type="ECO:0000269" key="37">
    <source>
    </source>
</evidence>
<evidence type="ECO:0000269" key="38">
    <source ref="43"/>
</evidence>
<evidence type="ECO:0000269" key="39">
    <source ref="7"/>
</evidence>
<evidence type="ECO:0000269" key="40">
    <source ref="8"/>
</evidence>
<evidence type="ECO:0000269" key="41">
    <source ref="9"/>
</evidence>
<evidence type="ECO:0000303" key="42">
    <source>
    </source>
</evidence>
<evidence type="ECO:0000303" key="43">
    <source>
    </source>
</evidence>
<evidence type="ECO:0000305" key="44"/>
<evidence type="ECO:0007829" key="45">
    <source>
        <dbReference type="PDB" id="2OAY"/>
    </source>
</evidence>
<evidence type="ECO:0007829" key="46">
    <source>
        <dbReference type="PDB" id="5DU3"/>
    </source>
</evidence>
<evidence type="ECO:0007829" key="47">
    <source>
        <dbReference type="PDB" id="5DUQ"/>
    </source>
</evidence>
<organism>
    <name type="scientific">Homo sapiens</name>
    <name type="common">Human</name>
    <dbReference type="NCBI Taxonomy" id="9606"/>
    <lineage>
        <taxon>Eukaryota</taxon>
        <taxon>Metazoa</taxon>
        <taxon>Chordata</taxon>
        <taxon>Craniata</taxon>
        <taxon>Vertebrata</taxon>
        <taxon>Euteleostomi</taxon>
        <taxon>Mammalia</taxon>
        <taxon>Eutheria</taxon>
        <taxon>Euarchontoglires</taxon>
        <taxon>Primates</taxon>
        <taxon>Haplorrhini</taxon>
        <taxon>Catarrhini</taxon>
        <taxon>Hominidae</taxon>
        <taxon>Homo</taxon>
    </lineage>
</organism>
<keyword id="KW-0002">3D-structure</keyword>
<keyword id="KW-0025">Alternative splicing</keyword>
<keyword id="KW-0094">Blood coagulation</keyword>
<keyword id="KW-0903">Direct protein sequencing</keyword>
<keyword id="KW-0225">Disease variant</keyword>
<keyword id="KW-1015">Disulfide bond</keyword>
<keyword id="KW-0280">Fibrinolysis</keyword>
<keyword id="KW-0325">Glycoprotein</keyword>
<keyword id="KW-0356">Hemostasis</keyword>
<keyword id="KW-0646">Protease inhibitor</keyword>
<keyword id="KW-1267">Proteomics identification</keyword>
<keyword id="KW-1185">Reference proteome</keyword>
<keyword id="KW-0677">Repeat</keyword>
<keyword id="KW-0964">Secreted</keyword>
<keyword id="KW-0722">Serine protease inhibitor</keyword>
<keyword id="KW-0732">Signal</keyword>
<dbReference type="EMBL" id="M13690">
    <property type="protein sequence ID" value="AAA35613.1"/>
    <property type="molecule type" value="mRNA"/>
</dbReference>
<dbReference type="EMBL" id="M13656">
    <property type="protein sequence ID" value="AAB59387.1"/>
    <property type="molecule type" value="mRNA"/>
</dbReference>
<dbReference type="EMBL" id="X07427">
    <property type="protein sequence ID" value="CAA30314.1"/>
    <property type="molecule type" value="Genomic_DNA"/>
</dbReference>
<dbReference type="EMBL" id="X07428">
    <property type="protein sequence ID" value="CAA30314.1"/>
    <property type="status" value="JOINED"/>
    <property type="molecule type" value="Genomic_DNA"/>
</dbReference>
<dbReference type="EMBL" id="X07429">
    <property type="protein sequence ID" value="CAA30314.1"/>
    <property type="status" value="JOINED"/>
    <property type="molecule type" value="Genomic_DNA"/>
</dbReference>
<dbReference type="EMBL" id="X07430">
    <property type="protein sequence ID" value="CAA30314.1"/>
    <property type="status" value="JOINED"/>
    <property type="molecule type" value="Genomic_DNA"/>
</dbReference>
<dbReference type="EMBL" id="X07431">
    <property type="protein sequence ID" value="CAA30314.1"/>
    <property type="status" value="JOINED"/>
    <property type="molecule type" value="Genomic_DNA"/>
</dbReference>
<dbReference type="EMBL" id="X07432">
    <property type="protein sequence ID" value="CAA30314.1"/>
    <property type="status" value="JOINED"/>
    <property type="molecule type" value="Genomic_DNA"/>
</dbReference>
<dbReference type="EMBL" id="X07433">
    <property type="protein sequence ID" value="CAA30314.1"/>
    <property type="status" value="JOINED"/>
    <property type="molecule type" value="Genomic_DNA"/>
</dbReference>
<dbReference type="EMBL" id="X07577">
    <property type="protein sequence ID" value="CAA30469.1"/>
    <property type="molecule type" value="mRNA"/>
</dbReference>
<dbReference type="EMBL" id="X54486">
    <property type="protein sequence ID" value="CAA38358.1"/>
    <property type="molecule type" value="Genomic_DNA"/>
</dbReference>
<dbReference type="EMBL" id="AF435921">
    <property type="protein sequence ID" value="AAM21515.1"/>
    <property type="molecule type" value="Genomic_DNA"/>
</dbReference>
<dbReference type="EMBL" id="AK293054">
    <property type="protein sequence ID" value="BAF85743.1"/>
    <property type="molecule type" value="mRNA"/>
</dbReference>
<dbReference type="EMBL" id="AK303809">
    <property type="protein sequence ID" value="BAG64762.1"/>
    <property type="molecule type" value="mRNA"/>
</dbReference>
<dbReference type="EMBL" id="AK303840">
    <property type="protein sequence ID" value="BAG64784.1"/>
    <property type="molecule type" value="mRNA"/>
</dbReference>
<dbReference type="EMBL" id="AK312626">
    <property type="protein sequence ID" value="BAG35512.1"/>
    <property type="molecule type" value="mRNA"/>
</dbReference>
<dbReference type="EMBL" id="BT006966">
    <property type="protein sequence ID" value="AAP35612.1"/>
    <property type="molecule type" value="mRNA"/>
</dbReference>
<dbReference type="EMBL" id="AB209826">
    <property type="protein sequence ID" value="BAD93063.1"/>
    <property type="molecule type" value="mRNA"/>
</dbReference>
<dbReference type="EMBL" id="AY904027">
    <property type="protein sequence ID" value="AAW69393.1"/>
    <property type="molecule type" value="Genomic_DNA"/>
</dbReference>
<dbReference type="EMBL" id="AP000662">
    <property type="status" value="NOT_ANNOTATED_CDS"/>
    <property type="molecule type" value="Genomic_DNA"/>
</dbReference>
<dbReference type="EMBL" id="AP002893">
    <property type="status" value="NOT_ANNOTATED_CDS"/>
    <property type="molecule type" value="Genomic_DNA"/>
</dbReference>
<dbReference type="EMBL" id="CH471076">
    <property type="protein sequence ID" value="EAW73764.1"/>
    <property type="molecule type" value="Genomic_DNA"/>
</dbReference>
<dbReference type="EMBL" id="BC011171">
    <property type="protein sequence ID" value="AAH11171.1"/>
    <property type="molecule type" value="mRNA"/>
</dbReference>
<dbReference type="EMBL" id="AY291075">
    <property type="protein sequence ID" value="AAQ19269.1"/>
    <property type="molecule type" value="Genomic_DNA"/>
</dbReference>
<dbReference type="EMBL" id="M30688">
    <property type="protein sequence ID" value="AAA53096.1"/>
    <property type="status" value="ALT_SEQ"/>
    <property type="molecule type" value="Genomic_DNA"/>
</dbReference>
<dbReference type="EMBL" id="M14036">
    <property type="protein sequence ID" value="AAA51848.1"/>
    <property type="molecule type" value="mRNA"/>
</dbReference>
<dbReference type="EMBL" id="M13203">
    <property type="protein sequence ID" value="AAA51849.1"/>
    <property type="molecule type" value="mRNA"/>
</dbReference>
<dbReference type="EMBL" id="S76944">
    <property type="protein sequence ID" value="AAB33044.2"/>
    <property type="molecule type" value="Genomic_DNA"/>
</dbReference>
<dbReference type="CCDS" id="CCDS7962.1">
    <molecule id="P05155-1"/>
</dbReference>
<dbReference type="PIR" id="S15386">
    <property type="entry name" value="ITHUC1"/>
</dbReference>
<dbReference type="RefSeq" id="NP_000053.2">
    <molecule id="P05155-1"/>
    <property type="nucleotide sequence ID" value="NM_000062.3"/>
</dbReference>
<dbReference type="RefSeq" id="NP_001027466.1">
    <molecule id="P05155-1"/>
    <property type="nucleotide sequence ID" value="NM_001032295.2"/>
</dbReference>
<dbReference type="PDB" id="2OAY">
    <property type="method" value="X-ray"/>
    <property type="resolution" value="2.35 A"/>
    <property type="chains" value="A=119-500"/>
</dbReference>
<dbReference type="PDB" id="5DU3">
    <property type="method" value="X-ray"/>
    <property type="resolution" value="2.10 A"/>
    <property type="chains" value="A/B=119-500"/>
</dbReference>
<dbReference type="PDB" id="5DUQ">
    <property type="method" value="X-ray"/>
    <property type="resolution" value="2.90 A"/>
    <property type="chains" value="A/B=118-500"/>
</dbReference>
<dbReference type="PDB" id="7AKV">
    <property type="method" value="EM"/>
    <property type="resolution" value="3.60 A"/>
    <property type="chains" value="A=98-500"/>
</dbReference>
<dbReference type="PDB" id="8W18">
    <property type="method" value="X-ray"/>
    <property type="resolution" value="3.94 A"/>
    <property type="chains" value="I=111-500"/>
</dbReference>
<dbReference type="PDBsum" id="2OAY"/>
<dbReference type="PDBsum" id="5DU3"/>
<dbReference type="PDBsum" id="5DUQ"/>
<dbReference type="PDBsum" id="7AKV"/>
<dbReference type="PDBsum" id="8W18"/>
<dbReference type="EMDB" id="EMD-11814"/>
<dbReference type="SMR" id="P05155"/>
<dbReference type="BioGRID" id="107171">
    <property type="interactions" value="52"/>
</dbReference>
<dbReference type="DIP" id="DIP-45635N"/>
<dbReference type="FunCoup" id="P05155">
    <property type="interactions" value="319"/>
</dbReference>
<dbReference type="IntAct" id="P05155">
    <property type="interactions" value="37"/>
</dbReference>
<dbReference type="MINT" id="P05155"/>
<dbReference type="STRING" id="9606.ENSP00000278407"/>
<dbReference type="ChEMBL" id="CHEMBL5305024"/>
<dbReference type="DrugBank" id="DB09130">
    <property type="generic name" value="Copper"/>
</dbReference>
<dbReference type="DrugBank" id="DB05961">
    <property type="generic name" value="PPL-100"/>
</dbReference>
<dbReference type="DrugBank" id="DB00203">
    <property type="generic name" value="Sildenafil"/>
</dbReference>
<dbReference type="MEROPS" id="I04.024"/>
<dbReference type="GlyConnect" id="749">
    <property type="glycosylation" value="41 N-Linked glycans (5 sites), 7 O-Linked glycans (3 sites)"/>
</dbReference>
<dbReference type="GlyCosmos" id="P05155">
    <property type="glycosylation" value="24 sites, 60 glycans"/>
</dbReference>
<dbReference type="GlyGen" id="P05155">
    <property type="glycosylation" value="27 sites, 171 N-linked glycans (5 sites), 8 O-linked glycans (12 sites)"/>
</dbReference>
<dbReference type="iPTMnet" id="P05155"/>
<dbReference type="PhosphoSitePlus" id="P05155"/>
<dbReference type="BioMuta" id="SERPING1"/>
<dbReference type="DMDM" id="124096"/>
<dbReference type="CPTAC" id="CPTAC-1305"/>
<dbReference type="CPTAC" id="CPTAC-684"/>
<dbReference type="CPTAC" id="non-CPTAC-1147"/>
<dbReference type="CPTAC" id="non-CPTAC-1148"/>
<dbReference type="jPOST" id="P05155"/>
<dbReference type="MassIVE" id="P05155"/>
<dbReference type="PaxDb" id="9606-ENSP00000278407"/>
<dbReference type="PeptideAtlas" id="P05155"/>
<dbReference type="ProteomicsDB" id="51806">
    <molecule id="P05155-1"/>
</dbReference>
<dbReference type="ProteomicsDB" id="5752"/>
<dbReference type="ProteomicsDB" id="5757"/>
<dbReference type="TopDownProteomics" id="P05155-1">
    <molecule id="P05155-1"/>
</dbReference>
<dbReference type="Antibodypedia" id="14214">
    <property type="antibodies" value="599 antibodies from 41 providers"/>
</dbReference>
<dbReference type="DNASU" id="710"/>
<dbReference type="Ensembl" id="ENST00000278407.9">
    <molecule id="P05155-1"/>
    <property type="protein sequence ID" value="ENSP00000278407.4"/>
    <property type="gene ID" value="ENSG00000149131.17"/>
</dbReference>
<dbReference type="Ensembl" id="ENST00000378323.8">
    <molecule id="P05155-3"/>
    <property type="protein sequence ID" value="ENSP00000367574.4"/>
    <property type="gene ID" value="ENSG00000149131.17"/>
</dbReference>
<dbReference type="Ensembl" id="ENST00000378324.6">
    <molecule id="P05155-2"/>
    <property type="protein sequence ID" value="ENSP00000367575.2"/>
    <property type="gene ID" value="ENSG00000149131.17"/>
</dbReference>
<dbReference type="Ensembl" id="ENST00000676670.1">
    <molecule id="P05155-1"/>
    <property type="protein sequence ID" value="ENSP00000504807.1"/>
    <property type="gene ID" value="ENSG00000149131.17"/>
</dbReference>
<dbReference type="GeneID" id="710"/>
<dbReference type="KEGG" id="hsa:710"/>
<dbReference type="MANE-Select" id="ENST00000278407.9">
    <property type="protein sequence ID" value="ENSP00000278407.4"/>
    <property type="RefSeq nucleotide sequence ID" value="NM_000062.3"/>
    <property type="RefSeq protein sequence ID" value="NP_000053.2"/>
</dbReference>
<dbReference type="UCSC" id="uc001nkp.2">
    <molecule id="P05155-1"/>
    <property type="organism name" value="human"/>
</dbReference>
<dbReference type="AGR" id="HGNC:1228"/>
<dbReference type="CTD" id="710"/>
<dbReference type="DisGeNET" id="710"/>
<dbReference type="GeneCards" id="SERPING1"/>
<dbReference type="HGNC" id="HGNC:1228">
    <property type="gene designation" value="SERPING1"/>
</dbReference>
<dbReference type="HPA" id="ENSG00000149131">
    <property type="expression patterns" value="Tissue enhanced (liver)"/>
</dbReference>
<dbReference type="MalaCards" id="SERPING1"/>
<dbReference type="MIM" id="106100">
    <property type="type" value="phenotype"/>
</dbReference>
<dbReference type="MIM" id="606860">
    <property type="type" value="gene"/>
</dbReference>
<dbReference type="neXtProt" id="NX_P05155"/>
<dbReference type="OpenTargets" id="ENSG00000149131"/>
<dbReference type="Orphanet" id="100050">
    <property type="disease" value="Hereditary angioedema type 1"/>
</dbReference>
<dbReference type="Orphanet" id="100051">
    <property type="disease" value="Hereditary angioedema type 2"/>
</dbReference>
<dbReference type="PharmGKB" id="PA35029"/>
<dbReference type="VEuPathDB" id="HostDB:ENSG00000149131"/>
<dbReference type="eggNOG" id="KOG2392">
    <property type="taxonomic scope" value="Eukaryota"/>
</dbReference>
<dbReference type="GeneTree" id="ENSGT00940000159681"/>
<dbReference type="HOGENOM" id="CLU_023330_3_0_1"/>
<dbReference type="InParanoid" id="P05155"/>
<dbReference type="OMA" id="FELSSCT"/>
<dbReference type="OrthoDB" id="6433428at2759"/>
<dbReference type="PAN-GO" id="P05155">
    <property type="GO annotations" value="3 GO annotations based on evolutionary models"/>
</dbReference>
<dbReference type="PhylomeDB" id="P05155"/>
<dbReference type="TreeFam" id="TF317350"/>
<dbReference type="PathwayCommons" id="P05155"/>
<dbReference type="Reactome" id="R-HSA-114608">
    <property type="pathway name" value="Platelet degranulation"/>
</dbReference>
<dbReference type="Reactome" id="R-HSA-140837">
    <property type="pathway name" value="Intrinsic Pathway of Fibrin Clot Formation"/>
</dbReference>
<dbReference type="Reactome" id="R-HSA-9657689">
    <property type="pathway name" value="Defective SERPING1 causes hereditary angioedema"/>
</dbReference>
<dbReference type="Reactome" id="R-HSA-977606">
    <property type="pathway name" value="Regulation of Complement cascade"/>
</dbReference>
<dbReference type="SignaLink" id="P05155"/>
<dbReference type="SIGNOR" id="P05155"/>
<dbReference type="BioGRID-ORCS" id="710">
    <property type="hits" value="13 hits in 1153 CRISPR screens"/>
</dbReference>
<dbReference type="ChiTaRS" id="SERPING1">
    <property type="organism name" value="human"/>
</dbReference>
<dbReference type="EvolutionaryTrace" id="P05155"/>
<dbReference type="GeneWiki" id="C1-inhibitor"/>
<dbReference type="GenomeRNAi" id="710"/>
<dbReference type="Pharos" id="P05155">
    <property type="development level" value="Tbio"/>
</dbReference>
<dbReference type="PRO" id="PR:P05155"/>
<dbReference type="Proteomes" id="UP000005640">
    <property type="component" value="Chromosome 11"/>
</dbReference>
<dbReference type="RNAct" id="P05155">
    <property type="molecule type" value="protein"/>
</dbReference>
<dbReference type="Bgee" id="ENSG00000149131">
    <property type="expression patterns" value="Expressed in right lobe of liver and 208 other cell types or tissues"/>
</dbReference>
<dbReference type="ExpressionAtlas" id="P05155">
    <property type="expression patterns" value="baseline and differential"/>
</dbReference>
<dbReference type="GO" id="GO:0072562">
    <property type="term" value="C:blood microparticle"/>
    <property type="evidence" value="ECO:0007005"/>
    <property type="project" value="UniProtKB"/>
</dbReference>
<dbReference type="GO" id="GO:0062023">
    <property type="term" value="C:collagen-containing extracellular matrix"/>
    <property type="evidence" value="ECO:0007005"/>
    <property type="project" value="BHF-UCL"/>
</dbReference>
<dbReference type="GO" id="GO:0005788">
    <property type="term" value="C:endoplasmic reticulum lumen"/>
    <property type="evidence" value="ECO:0000304"/>
    <property type="project" value="Reactome"/>
</dbReference>
<dbReference type="GO" id="GO:0070062">
    <property type="term" value="C:extracellular exosome"/>
    <property type="evidence" value="ECO:0007005"/>
    <property type="project" value="UniProtKB"/>
</dbReference>
<dbReference type="GO" id="GO:0005576">
    <property type="term" value="C:extracellular region"/>
    <property type="evidence" value="ECO:0000304"/>
    <property type="project" value="Reactome"/>
</dbReference>
<dbReference type="GO" id="GO:0005615">
    <property type="term" value="C:extracellular space"/>
    <property type="evidence" value="ECO:0007005"/>
    <property type="project" value="UniProtKB"/>
</dbReference>
<dbReference type="GO" id="GO:0031093">
    <property type="term" value="C:platelet alpha granule lumen"/>
    <property type="evidence" value="ECO:0000304"/>
    <property type="project" value="Reactome"/>
</dbReference>
<dbReference type="GO" id="GO:0004867">
    <property type="term" value="F:serine-type endopeptidase inhibitor activity"/>
    <property type="evidence" value="ECO:0000314"/>
    <property type="project" value="UniProtKB"/>
</dbReference>
<dbReference type="GO" id="GO:0008015">
    <property type="term" value="P:blood circulation"/>
    <property type="evidence" value="ECO:0000304"/>
    <property type="project" value="ProtInc"/>
</dbReference>
<dbReference type="GO" id="GO:0007596">
    <property type="term" value="P:blood coagulation"/>
    <property type="evidence" value="ECO:0007669"/>
    <property type="project" value="UniProtKB-KW"/>
</dbReference>
<dbReference type="GO" id="GO:0006958">
    <property type="term" value="P:complement activation, classical pathway"/>
    <property type="evidence" value="ECO:0007669"/>
    <property type="project" value="UniProtKB-KW"/>
</dbReference>
<dbReference type="GO" id="GO:0042730">
    <property type="term" value="P:fibrinolysis"/>
    <property type="evidence" value="ECO:0007669"/>
    <property type="project" value="UniProtKB-KW"/>
</dbReference>
<dbReference type="GO" id="GO:0045087">
    <property type="term" value="P:innate immune response"/>
    <property type="evidence" value="ECO:0007669"/>
    <property type="project" value="UniProtKB-KW"/>
</dbReference>
<dbReference type="GO" id="GO:0001869">
    <property type="term" value="P:negative regulation of complement activation, lectin pathway"/>
    <property type="evidence" value="ECO:0000314"/>
    <property type="project" value="UniProtKB"/>
</dbReference>
<dbReference type="CDD" id="cd02050">
    <property type="entry name" value="serpinG1_C1-INH"/>
    <property type="match status" value="1"/>
</dbReference>
<dbReference type="FunFam" id="3.30.497.10:FF:000013">
    <property type="entry name" value="Serpin family G member 1"/>
    <property type="match status" value="1"/>
</dbReference>
<dbReference type="Gene3D" id="2.30.39.10">
    <property type="entry name" value="Alpha-1-antitrypsin, domain 1"/>
    <property type="match status" value="1"/>
</dbReference>
<dbReference type="Gene3D" id="3.30.497.10">
    <property type="entry name" value="Antithrombin, subunit I, domain 2"/>
    <property type="match status" value="1"/>
</dbReference>
<dbReference type="InterPro" id="IPR023795">
    <property type="entry name" value="Serpin_CS"/>
</dbReference>
<dbReference type="InterPro" id="IPR023796">
    <property type="entry name" value="Serpin_dom"/>
</dbReference>
<dbReference type="InterPro" id="IPR000215">
    <property type="entry name" value="Serpin_fam"/>
</dbReference>
<dbReference type="InterPro" id="IPR036186">
    <property type="entry name" value="Serpin_sf"/>
</dbReference>
<dbReference type="InterPro" id="IPR042178">
    <property type="entry name" value="Serpin_sf_1"/>
</dbReference>
<dbReference type="InterPro" id="IPR042185">
    <property type="entry name" value="Serpin_sf_2"/>
</dbReference>
<dbReference type="PANTHER" id="PTHR11461:SF159">
    <property type="entry name" value="PLASMA PROTEASE C1 INHIBITOR"/>
    <property type="match status" value="1"/>
</dbReference>
<dbReference type="PANTHER" id="PTHR11461">
    <property type="entry name" value="SERINE PROTEASE INHIBITOR, SERPIN"/>
    <property type="match status" value="1"/>
</dbReference>
<dbReference type="Pfam" id="PF00079">
    <property type="entry name" value="Serpin"/>
    <property type="match status" value="1"/>
</dbReference>
<dbReference type="SMART" id="SM00093">
    <property type="entry name" value="SERPIN"/>
    <property type="match status" value="1"/>
</dbReference>
<dbReference type="SUPFAM" id="SSF56574">
    <property type="entry name" value="Serpins"/>
    <property type="match status" value="1"/>
</dbReference>
<dbReference type="PROSITE" id="PS00284">
    <property type="entry name" value="SERPIN"/>
    <property type="match status" value="1"/>
</dbReference>
<comment type="function">
    <text evidence="2 3 29 31 35">Serine protease inhibitor, which acrs as a regulator of the classical complement pathway (PubMed:10946292, PubMed:11527969, PubMed:3458172, PubMed:6416294). Forms a proteolytically inactive stoichiometric complex with the C1r or C1s proteases (PubMed:10946292, PubMed:3458172, PubMed:6416294). May also regulate blood coagulation, fibrinolysis and the generation of kinins (PubMed:8495195). Very efficient inhibitor of FXIIa. Inhibits chymotrypsin and kallikrein (PubMed:8495195).</text>
</comment>
<comment type="subunit">
    <text evidence="2">Interacts with MASP1.</text>
</comment>
<comment type="subunit">
    <text evidence="4 11">(Microbial infection) Binds to E.coli stcE which allows localization of SERPING1 to cell membranes thus protecting the bacteria against complement-mediated lysis.</text>
</comment>
<comment type="interaction">
    <interactant intactId="EBI-1223454">
        <id>P05155</id>
    </interactant>
    <interactant intactId="EBI-3926504">
        <id>P00736</id>
        <label>C1R</label>
    </interactant>
    <organismsDiffer>false</organismsDiffer>
    <experiments>2</experiments>
</comment>
<comment type="interaction">
    <interactant intactId="EBI-1223454">
        <id>P05155</id>
    </interactant>
    <interactant intactId="EBI-2810045">
        <id>P09871</id>
        <label>C1S</label>
    </interactant>
    <organismsDiffer>false</organismsDiffer>
    <experiments>5</experiments>
</comment>
<comment type="interaction">
    <interactant intactId="EBI-1223454">
        <id>P05155</id>
    </interactant>
    <interactant intactId="EBI-625022">
        <id>O43889-2</id>
        <label>CREB3</label>
    </interactant>
    <organismsDiffer>false</organismsDiffer>
    <experiments>3</experiments>
</comment>
<comment type="interaction">
    <interactant intactId="EBI-1223454">
        <id>P05155</id>
    </interactant>
    <interactant intactId="EBI-7965040">
        <id>O00187</id>
        <label>MASP2</label>
    </interactant>
    <organismsDiffer>false</organismsDiffer>
    <experiments>3</experiments>
</comment>
<comment type="interaction">
    <interactant intactId="EBI-1223454">
        <id>P05155</id>
    </interactant>
    <interactant intactId="EBI-5605520">
        <id>P00750</id>
        <label>PLAT</label>
    </interactant>
    <organismsDiffer>false</organismsDiffer>
    <experiments>2</experiments>
</comment>
<comment type="interaction">
    <interactant intactId="EBI-1223454">
        <id>P05155</id>
    </interactant>
    <interactant intactId="EBI-27104100">
        <id>A0A7D5SLD3</id>
        <label>MSP-3</label>
    </interactant>
    <organismsDiffer>true</organismsDiffer>
    <experiments>4</experiments>
</comment>
<comment type="interaction">
    <interactant intactId="EBI-1223454">
        <id>P05155</id>
    </interactant>
    <interactant intactId="EBI-25474098">
        <id>PRO_0000037310</id>
        <label>rep</label>
        <dbReference type="UniProtKB" id="P0C6X7"/>
    </interactant>
    <organismsDiffer>true</organismsDiffer>
    <experiments>2</experiments>
</comment>
<comment type="interaction">
    <interactant intactId="EBI-1223454">
        <id>P05155</id>
    </interactant>
    <interactant intactId="EBI-25487328">
        <id>PRO_0000037320</id>
        <label>rep</label>
        <dbReference type="UniProtKB" id="P0C6X7"/>
    </interactant>
    <organismsDiffer>true</organismsDiffer>
    <experiments>2</experiments>
</comment>
<comment type="interaction">
    <interactant intactId="EBI-1223454">
        <id>P05155</id>
    </interactant>
    <interactant intactId="EBI-15979286">
        <id>O82882</id>
        <label>stcE</label>
    </interactant>
    <organismsDiffer>true</organismsDiffer>
    <experiments>3</experiments>
</comment>
<comment type="interaction">
    <interactant intactId="EBI-1223454">
        <id>P05155</id>
    </interactant>
    <interactant intactId="EBI-27104360">
        <id>Q79GN7</id>
        <label>vag8</label>
    </interactant>
    <organismsDiffer>true</organismsDiffer>
    <experiments>3</experiments>
</comment>
<comment type="subcellular location">
    <subcellularLocation>
        <location evidence="30 31">Secreted</location>
    </subcellularLocation>
</comment>
<comment type="alternative products">
    <event type="alternative splicing"/>
    <isoform>
        <id>P05155-1</id>
        <name>1</name>
        <sequence type="displayed"/>
    </isoform>
    <isoform>
        <id>P05155-2</id>
        <name>2</name>
        <sequence type="described" ref="VSP_056662"/>
    </isoform>
    <isoform>
        <id>P05155-3</id>
        <name>3</name>
        <sequence type="described" ref="VSP_056663"/>
    </isoform>
</comment>
<comment type="PTM">
    <text evidence="5 10 13 15 17 18 19 20 22 25 30">Highly glycosylated (49%) with N- and O-glycosylation. O-glycosylated with core 1 or possibly core 8 glycans. N-glycan heterogeneity at Asn-25: Hex5HexNAc4 (minor), dHex1Hex5HexNAc4 (minor), Hex6HexNAc5 (major) and dHex1Hex6HexNAc5 (minor).</text>
</comment>
<comment type="PTM">
    <text evidence="14">Cleaved by C1S in vitro.</text>
</comment>
<comment type="PTM">
    <text evidence="4 11">(Microbial infection) Can be proteolytically cleaved by E.coli stcE.</text>
</comment>
<comment type="polymorphism">
    <text>Chymotrypsin uses Ala-465 as its reactive site in normal plasma protease C1 inhibitor, and His-466 as its reactive site in the variant His-466.</text>
</comment>
<comment type="disease" evidence="6 7 8 9 16 21 23 24 26 27 28 32 33 34 36 37 38">
    <disease id="DI-00543">
        <name>Angioedema, hereditary, 1</name>
        <acronym>HAE1</acronym>
        <description>An autosomal dominant disorder characterized by episodic local swelling involving subcutaneous or submucous tissue of the upper respiratory and gastrointestinal tracts, face, extremities, and genitalia. Hereditary angioedema due to C1 esterase inhibitor deficiency is comprised of two clinically indistinguishable forms. In hereditary angioedema type 1, serum levels of C1 esterase inhibitor are decreased, while in type 2, the levels are normal or elevated, but the protein is non-functional.</description>
        <dbReference type="MIM" id="106100"/>
    </disease>
    <text>The disease is caused by variants affecting the gene represented in this entry.</text>
</comment>
<comment type="similarity">
    <text evidence="44">Belongs to the serpin family.</text>
</comment>
<comment type="sequence caution" evidence="44">
    <conflict type="erroneous gene model prediction">
        <sequence resource="EMBL-CDS" id="AAA53096"/>
    </conflict>
</comment>
<comment type="online information" name="Wikipedia">
    <link uri="https://en.wikipedia.org/wiki/C1-inhibitor"/>
    <text>C1-inhibitor entry</text>
</comment>
<comment type="online information" name="SERPING1base">
    <link uri="https://databases.lovd.nl/shared/genes/SERPING1"/>
    <text>SERPING1 mutation db</text>
</comment>
<protein>
    <recommendedName>
        <fullName evidence="43">Plasma protease C1 inhibitor</fullName>
        <shortName>C1 Inh</shortName>
        <shortName>C1Inh</shortName>
    </recommendedName>
    <alternativeName>
        <fullName>C1 esterase inhibitor</fullName>
    </alternativeName>
    <alternativeName>
        <fullName evidence="43">C1-inhibiting factor</fullName>
    </alternativeName>
    <alternativeName>
        <fullName>Serpin G1</fullName>
    </alternativeName>
</protein>
<sequence length="500" mass="55154">MASRLTLLTLLLLLLAGDRASSNPNATSSSSQDPESLQDRGEGKVATTVISKMLFVEPILEVSSLPTTNSTTNSATKITANTTDEPTTQPTTEPTTQPTIQPTQPTTQLPTDSPTQPTTGSFCPGPVTLCSDLESHSTEAVLGDALVDFSLKLYHAFSAMKKVETNMAFSPFSIASLLTQVLLGAGENTKTNLESILSYPKDFTCVHQALKGFTTKGVTSVSQIFHSPDLAIRDTFVNASRTLYSSSPRVLSNNSDANLELINTWVAKNTNNKISRLLDSLPSDTRLVLLNAIYLSAKWKTTFDPKKTRMEPFHFKNSVIKVPMMNSKKYPVAHFIDQTLKAKVGQLQLSHNLSLVILVPQNLKHRLEDMEQALSPSVFKAIMEKLEMSKFQPTLLTLPRIKVTTSQDMLSIMEKLEFFDFSYDLNLCGLTEDPDLQVSAMQHQTVLELTETGVEAAAASAISVARTLLVFEVQQPFLFVLWDQQHKFPVFMGRVYDPRA</sequence>
<accession>P05155</accession>
<accession>A6NMU0</accession>
<accession>A8KAI9</accession>
<accession>B2R6L5</accession>
<accession>B4E1F0</accession>
<accession>B4E1H2</accession>
<accession>Q16304</accession>
<accession>Q547W3</accession>
<accession>Q59EI5</accession>
<accession>Q7Z455</accession>
<accession>Q96FE0</accession>
<accession>Q9UC49</accession>
<accession>Q9UCF9</accession>
<feature type="signal peptide" evidence="31">
    <location>
        <begin position="1"/>
        <end position="22"/>
    </location>
</feature>
<feature type="chain" id="PRO_0000032514" description="Plasma protease C1 inhibitor" evidence="30">
    <location>
        <begin position="23"/>
        <end position="500"/>
    </location>
</feature>
<feature type="repeat" description="1">
    <location>
        <begin position="85"/>
        <end position="88"/>
    </location>
</feature>
<feature type="repeat" description="2">
    <location>
        <begin position="89"/>
        <end position="92"/>
    </location>
</feature>
<feature type="repeat" description="3">
    <location>
        <begin position="93"/>
        <end position="96"/>
    </location>
</feature>
<feature type="repeat" description="4">
    <location>
        <begin position="97"/>
        <end position="100"/>
    </location>
</feature>
<feature type="repeat" description="5">
    <location>
        <begin position="101"/>
        <end position="104"/>
    </location>
</feature>
<feature type="repeat" description="6">
    <location>
        <begin position="105"/>
        <end position="108"/>
    </location>
</feature>
<feature type="repeat" description="7">
    <location>
        <begin position="116"/>
        <end position="119"/>
    </location>
</feature>
<feature type="region of interest" description="Disordered" evidence="1">
    <location>
        <begin position="20"/>
        <end position="43"/>
    </location>
</feature>
<feature type="region of interest" description="Disordered" evidence="1">
    <location>
        <begin position="65"/>
        <end position="118"/>
    </location>
</feature>
<feature type="region of interest" description="7 X 4 AA tandem repeats of [QE]-P-T-[TQ]">
    <location>
        <begin position="85"/>
        <end position="119"/>
    </location>
</feature>
<feature type="compositionally biased region" description="Low complexity" evidence="1">
    <location>
        <begin position="20"/>
        <end position="31"/>
    </location>
</feature>
<feature type="compositionally biased region" description="Low complexity" evidence="1">
    <location>
        <begin position="67"/>
        <end position="118"/>
    </location>
</feature>
<feature type="site" description="Reactive bond for chymotrypsin">
    <location>
        <begin position="465"/>
        <end position="466"/>
    </location>
</feature>
<feature type="site" description="Cleavage; by C1S" evidence="14">
    <location>
        <begin position="466"/>
        <end position="467"/>
    </location>
</feature>
<feature type="site" description="Reactive bond">
    <location>
        <begin position="466"/>
        <end position="467"/>
    </location>
</feature>
<feature type="glycosylation site" description="N-linked (GlcNAc...) (complex) asparagine" evidence="10 13 15 22 30">
    <location>
        <position position="25"/>
    </location>
</feature>
<feature type="glycosylation site" description="O-linked (GalNAc...) threonine" evidence="22 25">
    <location>
        <position position="47"/>
    </location>
</feature>
<feature type="glycosylation site" description="O-linked (GalNAc...) threonine" evidence="22 25 30">
    <location>
        <position position="48"/>
    </location>
</feature>
<feature type="glycosylation site" description="O-linked (GalNAc...) serine" evidence="30">
    <location>
        <position position="64"/>
    </location>
</feature>
<feature type="glycosylation site" description="N-linked (GlcNAc...) asparagine" evidence="15 19 30">
    <location>
        <position position="69"/>
    </location>
</feature>
<feature type="glycosylation site" description="O-linked (GalNAc...) threonine" evidence="30">
    <location>
        <position position="71"/>
    </location>
</feature>
<feature type="glycosylation site" description="N-linked (GlcNAc...) asparagine" evidence="19 30">
    <location>
        <position position="81"/>
    </location>
</feature>
<feature type="glycosylation site" description="O-linked (GalNAc...) threonine" evidence="30">
    <location>
        <position position="83"/>
    </location>
</feature>
<feature type="glycosylation site" description="O-linked (GalNAc...) threonine" evidence="30">
    <location>
        <position position="88"/>
    </location>
</feature>
<feature type="glycosylation site" description="O-linked (GalNAc...) threonine" evidence="30">
    <location>
        <position position="92"/>
    </location>
</feature>
<feature type="glycosylation site" description="O-linked (GalNAc...) threonine" evidence="30">
    <location>
        <position position="96"/>
    </location>
</feature>
<feature type="glycosylation site" description="N-linked (GlcNAc...) (complex) asparagine" evidence="10 15 17 18 19 30">
    <location>
        <position position="238"/>
    </location>
</feature>
<feature type="glycosylation site" description="N-linked (GlcNAc...) (complex) asparagine" evidence="5 10 15 18 19 30">
    <location>
        <position position="253"/>
    </location>
</feature>
<feature type="glycosylation site" description="N-linked (GlcNAc...) asparagine; in variant TA">
    <location>
        <position position="272"/>
    </location>
</feature>
<feature type="glycosylation site" description="N-linked (GlcNAc...) (complex) asparagine" evidence="10 15 18 19 20 30">
    <location>
        <position position="352"/>
    </location>
</feature>
<feature type="disulfide bond" evidence="17 30">
    <location>
        <begin position="123"/>
        <end position="428"/>
    </location>
</feature>
<feature type="disulfide bond" evidence="17 30">
    <location>
        <begin position="130"/>
        <end position="205"/>
    </location>
</feature>
<feature type="splice variant" id="VSP_056662" description="In isoform 2." evidence="42">
    <location>
        <begin position="1"/>
        <end position="52"/>
    </location>
</feature>
<feature type="splice variant" id="VSP_056663" description="In isoform 3." evidence="42">
    <original>G</original>
    <variation>GFLEPQ</variation>
    <location>
        <position position="17"/>
    </location>
</feature>
<feature type="sequence variant" id="VAR_071701" description="In HAE1; phenotype consistent with hereditary angioedema type 1." evidence="27">
    <original>L</original>
    <variation>R</variation>
    <location>
        <position position="11"/>
    </location>
</feature>
<feature type="sequence variant" id="VAR_027374" description="In dbSNP:rs11229062.">
    <original>D</original>
    <variation>E</variation>
    <location>
        <position position="39"/>
    </location>
</feature>
<feature type="sequence variant" id="VAR_027375" description="In dbSNP:rs11546660." evidence="16 24">
    <original>V</original>
    <variation>A</variation>
    <location>
        <position position="56"/>
    </location>
</feature>
<feature type="sequence variant" id="VAR_046202" description="In HAE1; phenotype consistent with hereditary angioedema type 2." evidence="6">
    <location>
        <begin position="84"/>
        <end position="138"/>
    </location>
</feature>
<feature type="sequence variant" id="VAR_068832" description="In HAE1; dbSNP:rs200534715." evidence="24">
    <original>T</original>
    <variation>A</variation>
    <location>
        <position position="118"/>
    </location>
</feature>
<feature type="sequence variant" id="VAR_027379" description="In HAE1; phenotype consistent with hereditary angioedema type 1." evidence="9">
    <original>C</original>
    <variation>Y</variation>
    <location>
        <position position="130"/>
    </location>
</feature>
<feature type="sequence variant" id="VAR_068833" description="In HAE1; dbSNP:rs281875168." evidence="24">
    <original>Y</original>
    <variation>C</variation>
    <location>
        <position position="154"/>
    </location>
</feature>
<feature type="sequence variant" id="VAR_068834" description="In HAE1; dbSNP:rs281875169." evidence="24">
    <original>S</original>
    <variation>F</variation>
    <location>
        <position position="170"/>
    </location>
</feature>
<feature type="sequence variant" id="VAR_068835" description="In HAE1; dbSNP:rs281875170." evidence="24">
    <original>G</original>
    <variation>R</variation>
    <location>
        <position position="184"/>
    </location>
</feature>
<feature type="sequence variant" id="VAR_068836" description="In HAE1; dbSNP:rs281875171." evidence="24">
    <original>L</original>
    <variation>P</variation>
    <location>
        <position position="230"/>
    </location>
</feature>
<feature type="sequence variant" id="VAR_068837" description="In HAE1; dbSNP:rs281875172." evidence="24">
    <original>I</original>
    <variation>K</variation>
    <location>
        <position position="232"/>
    </location>
</feature>
<feature type="sequence variant" id="VAR_071702" description="In HAE1." evidence="27">
    <original>W</original>
    <variation>R</variation>
    <location>
        <position position="265"/>
    </location>
</feature>
<feature type="sequence variant" id="VAR_068838" description="In HAE1." evidence="24">
    <location>
        <position position="272"/>
    </location>
</feature>
<feature type="sequence variant" id="VAR_007012" description="In HAE1; phenotype consistent with hereditary angioedema type 2; creates a new glycosylation site." evidence="21">
    <location>
        <position position="273"/>
    </location>
</feature>
<feature type="sequence variant" id="VAR_071703" description="In HAE1; phenotype consistent with hereditary angioedema type 2." evidence="27">
    <original>I</original>
    <variation>V</variation>
    <location>
        <position position="274"/>
    </location>
</feature>
<feature type="sequence variant" id="VAR_068839" description="In HAE1; dbSNP:rs281875173." evidence="24">
    <original>W</original>
    <variation>R</variation>
    <location>
        <position position="299"/>
    </location>
</feature>
<feature type="sequence variant" id="VAR_011751" description="In dbSNP:rs1803212.">
    <original>T</original>
    <variation>S</variation>
    <location>
        <position position="308"/>
    </location>
</feature>
<feature type="sequence variant" id="VAR_027376" description="In HAE1; phenotype consistent with hereditary angioedema type 1." evidence="16">
    <original>G</original>
    <variation>R</variation>
    <location>
        <position position="345"/>
    </location>
</feature>
<feature type="sequence variant" id="VAR_027380" description="In HAE1; phenotype consistent with hereditary angioedema type 1." evidence="9">
    <original>T</original>
    <variation>P</variation>
    <location>
        <position position="394"/>
    </location>
</feature>
<feature type="sequence variant" id="VAR_027381" description="In HAE1; phenotype consistent with hereditary angioedema type 1." evidence="9">
    <original>D</original>
    <variation>V</variation>
    <location>
        <position position="408"/>
    </location>
</feature>
<feature type="sequence variant" id="VAR_007013" description="In HAE1; phenotype consistent with hereditary angioedema type 2." evidence="34">
    <original>G</original>
    <variation>R</variation>
    <location>
        <position position="429"/>
    </location>
</feature>
<feature type="sequence variant" id="VAR_068840" description="In HAE1; dbSNP:rs281875174." evidence="24">
    <original>L</original>
    <variation>Q</variation>
    <location>
        <position position="430"/>
    </location>
</feature>
<feature type="sequence variant" id="VAR_068841" description="In HAE1; dbSNP:rs281875175." evidence="24">
    <original>M</original>
    <variation>T</variation>
    <location>
        <position position="441"/>
    </location>
</feature>
<feature type="sequence variant" id="VAR_068842" description="In HAE1; dbSNP:rs281875176." evidence="24">
    <original>L</original>
    <variation>P</variation>
    <location>
        <position position="447"/>
    </location>
</feature>
<feature type="sequence variant" id="VAR_007014" description="In HAE1; phenotype consistent with hereditary angioedema type 2; dbSNP:rs121907949." evidence="7">
    <original>V</original>
    <variation>E</variation>
    <location>
        <position position="454"/>
    </location>
</feature>
<feature type="sequence variant" id="VAR_007015" description="In HAE1; phenotype consistent with hereditary angioedema type 2." evidence="38">
    <original>A</original>
    <variation>E</variation>
    <location>
        <position position="456"/>
    </location>
</feature>
<feature type="sequence variant" id="VAR_007016" description="In HAE1; phenotype consistent with hereditary angioedema type 2; dbSNP:rs121907947." evidence="7 23 27">
    <original>A</original>
    <variation>T</variation>
    <location>
        <position position="458"/>
    </location>
</feature>
<feature type="sequence variant" id="VAR_007017" description="In HAE1; phenotype consistent with hereditary angioedema type 2." evidence="38">
    <original>A</original>
    <variation>V</variation>
    <location>
        <position position="458"/>
    </location>
</feature>
<feature type="sequence variant" id="VAR_007018" description="In HAE1; phenotype consistent with hereditary angioedema type 2; dbSNP:rs121907950." evidence="33">
    <original>A</original>
    <variation>V</variation>
    <location>
        <position position="465"/>
    </location>
</feature>
<feature type="sequence variant" id="VAR_007019" description="In HAE1; phenotype consistent with hereditary angioedema type 2; dbSNP:rs28940870." evidence="9 24 27">
    <original>R</original>
    <variation>C</variation>
    <location>
        <position position="466"/>
    </location>
</feature>
<feature type="sequence variant" id="VAR_007020" description="In HAE1; phenotype consistent with hereditary angioedema type 2; dbSNP:rs121907948." evidence="27 28">
    <original>R</original>
    <variation>H</variation>
    <location>
        <position position="466"/>
    </location>
</feature>
<feature type="sequence variant" id="VAR_007021" description="In HAE1; phenotype consistent with hereditary angioedema type 2; dbSNP:rs121907948." evidence="8 24">
    <original>R</original>
    <variation>L</variation>
    <location>
        <position position="466"/>
    </location>
</feature>
<feature type="sequence variant" id="VAR_007022" description="In HAE1; phenotype consistent with hereditary angioedema type 2; dbSNP:rs28940870." evidence="24 26">
    <original>R</original>
    <variation>S</variation>
    <location>
        <position position="466"/>
    </location>
</feature>
<feature type="sequence variant" id="VAR_007023" description="In HAE1; phenotype consistent with hereditary angioedema type 2." evidence="36">
    <original>T</original>
    <variation>P</variation>
    <location>
        <position position="467"/>
    </location>
</feature>
<feature type="sequence variant" id="VAR_027382" description="In HAE1; phenotype consistent with hereditary angioedema type 1." evidence="9">
    <original>V</original>
    <variation>E</variation>
    <location>
        <position position="473"/>
    </location>
</feature>
<feature type="sequence variant" id="VAR_068843" description="In HAE1; dbSNP:rs281875177." evidence="24">
    <original>V</original>
    <variation>G</variation>
    <location>
        <position position="473"/>
    </location>
</feature>
<feature type="sequence variant" id="VAR_007024" description="In HAE1; phenotype consistent with hereditary angioedema type 2." evidence="32">
    <original>V</original>
    <variation>M</variation>
    <location>
        <position position="473"/>
    </location>
</feature>
<feature type="sequence variant" id="VAR_007025" description="In HAE1." evidence="37">
    <original>Q</original>
    <variation>E</variation>
    <location>
        <position position="474"/>
    </location>
</feature>
<feature type="sequence variant" id="VAR_007026" description="In HAE1; phenotype consistent with hereditary angioedema type 2." evidence="37">
    <original>F</original>
    <variation>S</variation>
    <location>
        <position position="477"/>
    </location>
</feature>
<feature type="sequence variant" id="VAR_007027" description="In dbSNP:rs4926." evidence="12 16 24 39 40 41">
    <original>V</original>
    <variation>M</variation>
    <location>
        <position position="480"/>
    </location>
</feature>
<feature type="sequence variant" id="VAR_007028" description="In HAE1; phenotype consistent with hereditary angioedema type 2." evidence="32">
    <original>L</original>
    <variation>P</variation>
    <location>
        <position position="481"/>
    </location>
</feature>
<feature type="sequence variant" id="VAR_007029" description="In HAE1; phenotype consistent with hereditary angioedema type 2." evidence="32">
    <original>L</original>
    <variation>R</variation>
    <location>
        <position position="481"/>
    </location>
</feature>
<feature type="sequence variant" id="VAR_007030" description="In HAE1; phenotype consistent with hereditary angioedema type 2." evidence="32">
    <original>P</original>
    <variation>R</variation>
    <location>
        <position position="489"/>
    </location>
</feature>
<feature type="sequence variant" id="VAR_027383" description="In HAE1; phenotype consistent with hereditary angioedema type 1." evidence="9 27">
    <original>G</original>
    <variation>E</variation>
    <location>
        <position position="493"/>
    </location>
</feature>
<feature type="sequence variant" id="VAR_071704" description="In HAE1; phenotype consistent with hereditary angioedema type 2." evidence="27">
    <original>G</original>
    <variation>R</variation>
    <location>
        <position position="493"/>
    </location>
</feature>
<feature type="sequence variant" id="VAR_068844" description="In HAE1; dbSNP:rs281875178." evidence="24">
    <original>D</original>
    <variation>G</variation>
    <location>
        <position position="497"/>
    </location>
</feature>
<feature type="sequence variant" id="VAR_027384" description="In HAE1; phenotype consistent with hereditary angioedema type 1." evidence="9">
    <original>P</original>
    <variation>R</variation>
    <location>
        <position position="498"/>
    </location>
</feature>
<feature type="sequence variant" id="VAR_007031" description="In HAE1; phenotype consistent with hereditary angioedema type 2." evidence="32">
    <original>P</original>
    <variation>S</variation>
    <location>
        <position position="498"/>
    </location>
</feature>
<feature type="sequence conflict" description="In Ref. 6; BAF85743." evidence="44" ref="6">
    <original>T</original>
    <variation>S</variation>
    <location>
        <position position="103"/>
    </location>
</feature>
<feature type="sequence conflict" description="In Ref. 2; AAB59387." evidence="44" ref="2">
    <original>E</original>
    <variation>Q</variation>
    <location>
        <position position="187"/>
    </location>
</feature>
<feature type="sequence conflict" description="In Ref. 1; AAA35613." evidence="44" ref="1">
    <original>K</original>
    <variation>R</variation>
    <location>
        <position position="306"/>
    </location>
</feature>
<feature type="sequence conflict" description="In Ref. 19; AA sequence." evidence="44" ref="19">
    <original>HFKNSVI</original>
    <variation>QLQKLSY</variation>
    <location>
        <begin position="314"/>
        <end position="320"/>
    </location>
</feature>
<feature type="sequence conflict" description="In Ref. 19; AA sequence." evidence="44" ref="19">
    <original>V</original>
    <variation>M</variation>
    <location>
        <position position="322"/>
    </location>
</feature>
<feature type="sequence conflict" description="In Ref. 19; AA sequence." evidence="44" ref="19">
    <original>V</original>
    <variation>L</variation>
    <location>
        <position position="332"/>
    </location>
</feature>
<feature type="sequence conflict" description="In Ref. 19; AA sequence." evidence="44" ref="19">
    <original>MEQALS</original>
    <variation>TGTGSQ</variation>
    <location>
        <begin position="370"/>
        <end position="375"/>
    </location>
</feature>
<feature type="sequence conflict" description="In Ref. 19; AA sequence." evidence="44" ref="19">
    <original>E</original>
    <variation>V</variation>
    <location>
        <position position="417"/>
    </location>
</feature>
<feature type="sequence conflict" description="In Ref. 19; AA sequence." evidence="44" ref="19">
    <original>S</original>
    <variation>F</variation>
    <location>
        <position position="439"/>
    </location>
</feature>
<feature type="helix" evidence="46">
    <location>
        <begin position="132"/>
        <end position="137"/>
    </location>
</feature>
<feature type="helix" evidence="46">
    <location>
        <begin position="139"/>
        <end position="160"/>
    </location>
</feature>
<feature type="strand" evidence="46">
    <location>
        <begin position="167"/>
        <end position="169"/>
    </location>
</feature>
<feature type="helix" evidence="46">
    <location>
        <begin position="171"/>
        <end position="182"/>
    </location>
</feature>
<feature type="helix" evidence="46">
    <location>
        <begin position="187"/>
        <end position="197"/>
    </location>
</feature>
<feature type="helix" evidence="46">
    <location>
        <begin position="206"/>
        <end position="212"/>
    </location>
</feature>
<feature type="strand" evidence="46">
    <location>
        <begin position="218"/>
        <end position="226"/>
    </location>
</feature>
<feature type="helix" evidence="46">
    <location>
        <begin position="234"/>
        <end position="244"/>
    </location>
</feature>
<feature type="helix" evidence="46">
    <location>
        <begin position="255"/>
        <end position="269"/>
    </location>
</feature>
<feature type="turn" evidence="46">
    <location>
        <begin position="270"/>
        <end position="272"/>
    </location>
</feature>
<feature type="strand" evidence="46">
    <location>
        <begin position="287"/>
        <end position="295"/>
    </location>
</feature>
<feature type="strand" evidence="46">
    <location>
        <begin position="299"/>
        <end position="301"/>
    </location>
</feature>
<feature type="helix" evidence="46">
    <location>
        <begin position="305"/>
        <end position="307"/>
    </location>
</feature>
<feature type="strand" evidence="46">
    <location>
        <begin position="309"/>
        <end position="315"/>
    </location>
</feature>
<feature type="strand" evidence="46">
    <location>
        <begin position="318"/>
        <end position="337"/>
    </location>
</feature>
<feature type="turn" evidence="46">
    <location>
        <begin position="338"/>
        <end position="341"/>
    </location>
</feature>
<feature type="strand" evidence="46">
    <location>
        <begin position="342"/>
        <end position="350"/>
    </location>
</feature>
<feature type="strand" evidence="46">
    <location>
        <begin position="353"/>
        <end position="362"/>
    </location>
</feature>
<feature type="helix" evidence="46">
    <location>
        <begin position="367"/>
        <end position="373"/>
    </location>
</feature>
<feature type="helix" evidence="46">
    <location>
        <begin position="376"/>
        <end position="387"/>
    </location>
</feature>
<feature type="strand" evidence="46">
    <location>
        <begin position="392"/>
        <end position="399"/>
    </location>
</feature>
<feature type="strand" evidence="46">
    <location>
        <begin position="401"/>
        <end position="408"/>
    </location>
</feature>
<feature type="helix" evidence="46">
    <location>
        <begin position="409"/>
        <end position="415"/>
    </location>
</feature>
<feature type="strand" evidence="45">
    <location>
        <begin position="417"/>
        <end position="419"/>
    </location>
</feature>
<feature type="turn" evidence="46">
    <location>
        <begin position="420"/>
        <end position="422"/>
    </location>
</feature>
<feature type="turn" evidence="46">
    <location>
        <begin position="428"/>
        <end position="430"/>
    </location>
</feature>
<feature type="strand" evidence="46">
    <location>
        <begin position="440"/>
        <end position="449"/>
    </location>
</feature>
<feature type="strand" evidence="46">
    <location>
        <begin position="453"/>
        <end position="455"/>
    </location>
</feature>
<feature type="helix" evidence="47">
    <location>
        <begin position="458"/>
        <end position="461"/>
    </location>
</feature>
<feature type="strand" evidence="46">
    <location>
        <begin position="469"/>
        <end position="472"/>
    </location>
</feature>
<feature type="strand" evidence="46">
    <location>
        <begin position="477"/>
        <end position="483"/>
    </location>
</feature>
<feature type="turn" evidence="46">
    <location>
        <begin position="484"/>
        <end position="487"/>
    </location>
</feature>
<feature type="strand" evidence="46">
    <location>
        <begin position="488"/>
        <end position="496"/>
    </location>
</feature>